<gene>
    <name type="ordered locus">Hac_0267</name>
</gene>
<protein>
    <recommendedName>
        <fullName evidence="1">Putative nickel-responsive regulator</fullName>
    </recommendedName>
</protein>
<keyword id="KW-0238">DNA-binding</keyword>
<keyword id="KW-0479">Metal-binding</keyword>
<keyword id="KW-0533">Nickel</keyword>
<keyword id="KW-0804">Transcription</keyword>
<keyword id="KW-0805">Transcription regulation</keyword>
<proteinExistence type="inferred from homology"/>
<name>NIKR_HELAH</name>
<dbReference type="EMBL" id="AM260522">
    <property type="protein sequence ID" value="CAJ99113.1"/>
    <property type="molecule type" value="Genomic_DNA"/>
</dbReference>
<dbReference type="RefSeq" id="WP_011577228.1">
    <property type="nucleotide sequence ID" value="NC_008229.1"/>
</dbReference>
<dbReference type="SMR" id="Q17Z13"/>
<dbReference type="STRING" id="382638.Hac_0267"/>
<dbReference type="GeneID" id="31757785"/>
<dbReference type="KEGG" id="hac:Hac_0267"/>
<dbReference type="eggNOG" id="COG0864">
    <property type="taxonomic scope" value="Bacteria"/>
</dbReference>
<dbReference type="HOGENOM" id="CLU_113319_1_0_7"/>
<dbReference type="OrthoDB" id="9806294at2"/>
<dbReference type="BioCyc" id="HACI382638:HAC_RS01195-MONOMER"/>
<dbReference type="Proteomes" id="UP000000775">
    <property type="component" value="Chromosome"/>
</dbReference>
<dbReference type="GO" id="GO:0003677">
    <property type="term" value="F:DNA binding"/>
    <property type="evidence" value="ECO:0007669"/>
    <property type="project" value="UniProtKB-KW"/>
</dbReference>
<dbReference type="GO" id="GO:0003700">
    <property type="term" value="F:DNA-binding transcription factor activity"/>
    <property type="evidence" value="ECO:0007669"/>
    <property type="project" value="UniProtKB-UniRule"/>
</dbReference>
<dbReference type="GO" id="GO:0016151">
    <property type="term" value="F:nickel cation binding"/>
    <property type="evidence" value="ECO:0007669"/>
    <property type="project" value="UniProtKB-UniRule"/>
</dbReference>
<dbReference type="GO" id="GO:0010045">
    <property type="term" value="P:response to nickel cation"/>
    <property type="evidence" value="ECO:0007669"/>
    <property type="project" value="InterPro"/>
</dbReference>
<dbReference type="CDD" id="cd22231">
    <property type="entry name" value="RHH_NikR_HicB-like"/>
    <property type="match status" value="1"/>
</dbReference>
<dbReference type="FunFam" id="1.10.1220.10:FF:000010">
    <property type="entry name" value="Putative nickel-responsive regulator"/>
    <property type="match status" value="1"/>
</dbReference>
<dbReference type="FunFam" id="3.30.70.1150:FF:000004">
    <property type="entry name" value="Putative nickel-responsive regulator"/>
    <property type="match status" value="1"/>
</dbReference>
<dbReference type="Gene3D" id="3.30.70.1150">
    <property type="entry name" value="ACT-like. Chain A, domain 2"/>
    <property type="match status" value="1"/>
</dbReference>
<dbReference type="Gene3D" id="1.10.1220.10">
    <property type="entry name" value="Met repressor-like"/>
    <property type="match status" value="1"/>
</dbReference>
<dbReference type="HAMAP" id="MF_00476">
    <property type="entry name" value="NikR"/>
    <property type="match status" value="1"/>
</dbReference>
<dbReference type="InterPro" id="IPR027271">
    <property type="entry name" value="Acetolactate_synth/TF_NikR_C"/>
</dbReference>
<dbReference type="InterPro" id="IPR045865">
    <property type="entry name" value="ACT-like_dom_sf"/>
</dbReference>
<dbReference type="InterPro" id="IPR013321">
    <property type="entry name" value="Arc_rbn_hlx_hlx"/>
</dbReference>
<dbReference type="InterPro" id="IPR002145">
    <property type="entry name" value="CopG"/>
</dbReference>
<dbReference type="InterPro" id="IPR050192">
    <property type="entry name" value="CopG/NikR_regulator"/>
</dbReference>
<dbReference type="InterPro" id="IPR022988">
    <property type="entry name" value="Ni_resp_reg_NikR"/>
</dbReference>
<dbReference type="InterPro" id="IPR010985">
    <property type="entry name" value="Ribbon_hlx_hlx"/>
</dbReference>
<dbReference type="InterPro" id="IPR014864">
    <property type="entry name" value="TF_NikR_Ni-bd_C"/>
</dbReference>
<dbReference type="NCBIfam" id="NF001884">
    <property type="entry name" value="PRK00630.1"/>
    <property type="match status" value="1"/>
</dbReference>
<dbReference type="NCBIfam" id="NF002169">
    <property type="entry name" value="PRK01002.1"/>
    <property type="match status" value="1"/>
</dbReference>
<dbReference type="NCBIfam" id="NF002815">
    <property type="entry name" value="PRK02967.1"/>
    <property type="match status" value="1"/>
</dbReference>
<dbReference type="NCBIfam" id="NF003381">
    <property type="entry name" value="PRK04460.1"/>
    <property type="match status" value="1"/>
</dbReference>
<dbReference type="PANTHER" id="PTHR34719">
    <property type="entry name" value="NICKEL-RESPONSIVE REGULATOR"/>
    <property type="match status" value="1"/>
</dbReference>
<dbReference type="PANTHER" id="PTHR34719:SF2">
    <property type="entry name" value="NICKEL-RESPONSIVE REGULATOR"/>
    <property type="match status" value="1"/>
</dbReference>
<dbReference type="Pfam" id="PF08753">
    <property type="entry name" value="NikR_C"/>
    <property type="match status" value="1"/>
</dbReference>
<dbReference type="Pfam" id="PF01402">
    <property type="entry name" value="RHH_1"/>
    <property type="match status" value="1"/>
</dbReference>
<dbReference type="SUPFAM" id="SSF55021">
    <property type="entry name" value="ACT-like"/>
    <property type="match status" value="1"/>
</dbReference>
<dbReference type="SUPFAM" id="SSF47598">
    <property type="entry name" value="Ribbon-helix-helix"/>
    <property type="match status" value="1"/>
</dbReference>
<feature type="chain" id="PRO_1000014068" description="Putative nickel-responsive regulator">
    <location>
        <begin position="1"/>
        <end position="148"/>
    </location>
</feature>
<feature type="binding site" evidence="1">
    <location>
        <position position="88"/>
    </location>
    <ligand>
        <name>Ni(2+)</name>
        <dbReference type="ChEBI" id="CHEBI:49786"/>
    </ligand>
</feature>
<feature type="binding site" evidence="1">
    <location>
        <position position="99"/>
    </location>
    <ligand>
        <name>Ni(2+)</name>
        <dbReference type="ChEBI" id="CHEBI:49786"/>
    </ligand>
</feature>
<feature type="binding site" evidence="1">
    <location>
        <position position="101"/>
    </location>
    <ligand>
        <name>Ni(2+)</name>
        <dbReference type="ChEBI" id="CHEBI:49786"/>
    </ligand>
</feature>
<feature type="binding site" evidence="1">
    <location>
        <position position="107"/>
    </location>
    <ligand>
        <name>Ni(2+)</name>
        <dbReference type="ChEBI" id="CHEBI:49786"/>
    </ligand>
</feature>
<accession>Q17Z13</accession>
<reference key="1">
    <citation type="journal article" date="2006" name="PLoS Genet.">
        <title>Who ate whom? Adaptive Helicobacter genomic changes that accompanied a host jump from early humans to large felines.</title>
        <authorList>
            <person name="Eppinger M."/>
            <person name="Baar C."/>
            <person name="Linz B."/>
            <person name="Raddatz G."/>
            <person name="Lanz C."/>
            <person name="Keller H."/>
            <person name="Morelli G."/>
            <person name="Gressmann H."/>
            <person name="Achtman M."/>
            <person name="Schuster S.C."/>
        </authorList>
    </citation>
    <scope>NUCLEOTIDE SEQUENCE [LARGE SCALE GENOMIC DNA]</scope>
    <source>
        <strain>Sheeba</strain>
    </source>
</reference>
<organism>
    <name type="scientific">Helicobacter acinonychis (strain Sheeba)</name>
    <dbReference type="NCBI Taxonomy" id="382638"/>
    <lineage>
        <taxon>Bacteria</taxon>
        <taxon>Pseudomonadati</taxon>
        <taxon>Campylobacterota</taxon>
        <taxon>Epsilonproteobacteria</taxon>
        <taxon>Campylobacterales</taxon>
        <taxon>Helicobacteraceae</taxon>
        <taxon>Helicobacter</taxon>
    </lineage>
</organism>
<comment type="function">
    <text evidence="1">Transcriptional regulator.</text>
</comment>
<comment type="cofactor">
    <cofactor evidence="1">
        <name>Ni(2+)</name>
        <dbReference type="ChEBI" id="CHEBI:49786"/>
    </cofactor>
    <text evidence="1">Binds 1 nickel ion per subunit.</text>
</comment>
<comment type="similarity">
    <text evidence="1">Belongs to the transcriptional regulatory CopG/NikR family.</text>
</comment>
<sequence length="148" mass="16984">MDTNNKDDSIIRFSVSLQQNLLDELDNRIIKNGYSSRSELVRDLIREKLVEDNWIEDSPDDKSKVAVLVVIYDHHQRELNQRMIDIQHASETHVLCTTHIHMDSHNCLETIILKGSSAEVQRLQLEIGGLRGVKFAKLTKASSFESNE</sequence>
<evidence type="ECO:0000255" key="1">
    <source>
        <dbReference type="HAMAP-Rule" id="MF_00476"/>
    </source>
</evidence>